<sequence>MEAAADGPAETQSPVQKDSPAKTQSPAQDTSIMSRNNADTGRVLALPEHKKKRKGNLPAESVKILRDWMYKHRFKAYPSEEEKQMLSEKTNLSLLQISNWFINARRRILPDMLQQHRNDPIIGHKTGKDAHATHLQSTEASVPAKSGPSGPDNVQSLPLWPLPKGQMSREKQPDPESAPSQKLTGIAQPKKKVKVSITSPSSPELVSPEEYADFSSFLLLVDAAVQRAAELELEKKQEPNP</sequence>
<protein>
    <recommendedName>
        <fullName>Homeobox protein TGIF2LX</fullName>
    </recommendedName>
    <alternativeName>
        <fullName>TGF-beta-induced transcription factor 2-like protein</fullName>
    </alternativeName>
    <alternativeName>
        <fullName>TGFB-induced factor 2-like protein, X-linked</fullName>
    </alternativeName>
    <alternativeName>
        <fullName>TGIF-like on the X</fullName>
    </alternativeName>
</protein>
<feature type="chain" id="PRO_0000049329" description="Homeobox protein TGIF2LX">
    <location>
        <begin position="1"/>
        <end position="241"/>
    </location>
</feature>
<feature type="DNA-binding region" description="Homeobox; TALE-type" evidence="2">
    <location>
        <begin position="48"/>
        <end position="111"/>
    </location>
</feature>
<feature type="region of interest" description="Disordered" evidence="3">
    <location>
        <begin position="1"/>
        <end position="58"/>
    </location>
</feature>
<feature type="region of interest" description="Disordered" evidence="3">
    <location>
        <begin position="125"/>
        <end position="207"/>
    </location>
</feature>
<feature type="compositionally biased region" description="Polar residues" evidence="3">
    <location>
        <begin position="10"/>
        <end position="39"/>
    </location>
</feature>
<feature type="sequence conflict" description="In Ref. 1; ABM92085." evidence="4" ref="1">
    <original>I</original>
    <variation>V</variation>
    <location>
        <position position="64"/>
    </location>
</feature>
<organism>
    <name type="scientific">Pan troglodytes</name>
    <name type="common">Chimpanzee</name>
    <dbReference type="NCBI Taxonomy" id="9598"/>
    <lineage>
        <taxon>Eukaryota</taxon>
        <taxon>Metazoa</taxon>
        <taxon>Chordata</taxon>
        <taxon>Craniata</taxon>
        <taxon>Vertebrata</taxon>
        <taxon>Euteleostomi</taxon>
        <taxon>Mammalia</taxon>
        <taxon>Eutheria</taxon>
        <taxon>Euarchontoglires</taxon>
        <taxon>Primates</taxon>
        <taxon>Haplorrhini</taxon>
        <taxon>Catarrhini</taxon>
        <taxon>Hominidae</taxon>
        <taxon>Pan</taxon>
    </lineage>
</organism>
<reference key="1">
    <citation type="submission" date="2001-09" db="EMBL/GenBank/DDBJ databases">
        <title>Characterisation of a TGIF-like protein gene in the human Xq21.3-Yp11.2 homology block.</title>
        <authorList>
            <person name="Blanco-Arias P."/>
        </authorList>
    </citation>
    <scope>NUCLEOTIDE SEQUENCE [MRNA]</scope>
</reference>
<reference key="2">
    <citation type="submission" date="2006-08" db="EMBL/GenBank/DDBJ databases">
        <title>Positive selection in transcription factor genes on the human lineage.</title>
        <authorList>
            <person name="Nickel G.C."/>
            <person name="Tefft D.L."/>
            <person name="Trevarthen K."/>
            <person name="Funt J."/>
            <person name="Adams M.D."/>
        </authorList>
    </citation>
    <scope>NUCLEOTIDE SEQUENCE [GENOMIC DNA]</scope>
</reference>
<comment type="function">
    <text evidence="1">May have a transcription role in testis.</text>
</comment>
<comment type="subcellular location">
    <subcellularLocation>
        <location evidence="2">Nucleus</location>
    </subcellularLocation>
</comment>
<comment type="similarity">
    <text evidence="4">Belongs to the TALE/TGIF homeobox family.</text>
</comment>
<dbReference type="EMBL" id="AJ345073">
    <property type="protein sequence ID" value="CAC87895.1"/>
    <property type="molecule type" value="mRNA"/>
</dbReference>
<dbReference type="EMBL" id="DQ977419">
    <property type="protein sequence ID" value="ABM92085.1"/>
    <property type="molecule type" value="Genomic_DNA"/>
</dbReference>
<dbReference type="RefSeq" id="NP_001009067.1">
    <property type="nucleotide sequence ID" value="NM_001009067.1"/>
</dbReference>
<dbReference type="RefSeq" id="XP_009437580.2">
    <property type="nucleotide sequence ID" value="XM_009439305.4"/>
</dbReference>
<dbReference type="BMRB" id="Q8MIB7"/>
<dbReference type="SMR" id="Q8MIB7"/>
<dbReference type="FunCoup" id="Q8MIB7">
    <property type="interactions" value="19"/>
</dbReference>
<dbReference type="STRING" id="9598.ENSPTRP00000037983"/>
<dbReference type="PaxDb" id="9598-ENSPTRP00000037983"/>
<dbReference type="GeneID" id="450174"/>
<dbReference type="KEGG" id="ptr:450174"/>
<dbReference type="CTD" id="90316"/>
<dbReference type="eggNOG" id="KOG0773">
    <property type="taxonomic scope" value="Eukaryota"/>
</dbReference>
<dbReference type="InParanoid" id="Q8MIB7"/>
<dbReference type="Proteomes" id="UP000002277">
    <property type="component" value="Unplaced"/>
</dbReference>
<dbReference type="GO" id="GO:0005634">
    <property type="term" value="C:nucleus"/>
    <property type="evidence" value="ECO:0007669"/>
    <property type="project" value="UniProtKB-SubCell"/>
</dbReference>
<dbReference type="GO" id="GO:0003677">
    <property type="term" value="F:DNA binding"/>
    <property type="evidence" value="ECO:0007669"/>
    <property type="project" value="UniProtKB-KW"/>
</dbReference>
<dbReference type="GO" id="GO:0001227">
    <property type="term" value="F:DNA-binding transcription repressor activity, RNA polymerase II-specific"/>
    <property type="evidence" value="ECO:0000318"/>
    <property type="project" value="GO_Central"/>
</dbReference>
<dbReference type="GO" id="GO:0000122">
    <property type="term" value="P:negative regulation of transcription by RNA polymerase II"/>
    <property type="evidence" value="ECO:0000318"/>
    <property type="project" value="GO_Central"/>
</dbReference>
<dbReference type="CDD" id="cd00086">
    <property type="entry name" value="homeodomain"/>
    <property type="match status" value="1"/>
</dbReference>
<dbReference type="FunFam" id="1.10.10.60:FF:000059">
    <property type="entry name" value="TGFB-induced factor homeobox 1"/>
    <property type="match status" value="1"/>
</dbReference>
<dbReference type="Gene3D" id="1.10.10.60">
    <property type="entry name" value="Homeodomain-like"/>
    <property type="match status" value="1"/>
</dbReference>
<dbReference type="InterPro" id="IPR001356">
    <property type="entry name" value="HD"/>
</dbReference>
<dbReference type="InterPro" id="IPR009057">
    <property type="entry name" value="Homeodomain-like_sf"/>
</dbReference>
<dbReference type="InterPro" id="IPR008422">
    <property type="entry name" value="KN_HD"/>
</dbReference>
<dbReference type="InterPro" id="IPR050224">
    <property type="entry name" value="TALE_homeobox"/>
</dbReference>
<dbReference type="PANTHER" id="PTHR11850">
    <property type="entry name" value="HOMEOBOX PROTEIN TRANSCRIPTION FACTORS"/>
    <property type="match status" value="1"/>
</dbReference>
<dbReference type="Pfam" id="PF05920">
    <property type="entry name" value="Homeobox_KN"/>
    <property type="match status" value="1"/>
</dbReference>
<dbReference type="SMART" id="SM00389">
    <property type="entry name" value="HOX"/>
    <property type="match status" value="1"/>
</dbReference>
<dbReference type="SUPFAM" id="SSF46689">
    <property type="entry name" value="Homeodomain-like"/>
    <property type="match status" value="1"/>
</dbReference>
<dbReference type="PROSITE" id="PS50071">
    <property type="entry name" value="HOMEOBOX_2"/>
    <property type="match status" value="1"/>
</dbReference>
<evidence type="ECO:0000250" key="1"/>
<evidence type="ECO:0000255" key="2">
    <source>
        <dbReference type="PROSITE-ProRule" id="PRU00108"/>
    </source>
</evidence>
<evidence type="ECO:0000256" key="3">
    <source>
        <dbReference type="SAM" id="MobiDB-lite"/>
    </source>
</evidence>
<evidence type="ECO:0000305" key="4"/>
<keyword id="KW-0238">DNA-binding</keyword>
<keyword id="KW-0371">Homeobox</keyword>
<keyword id="KW-0539">Nucleus</keyword>
<keyword id="KW-1185">Reference proteome</keyword>
<keyword id="KW-0804">Transcription</keyword>
<keyword id="KW-0805">Transcription regulation</keyword>
<gene>
    <name type="primary">TGIF2LX</name>
    <name type="synonym">TGIFLX</name>
</gene>
<accession>Q8MIB7</accession>
<accession>A2T7D0</accession>
<proteinExistence type="evidence at transcript level"/>
<name>TF2LX_PANTR</name>